<keyword id="KW-0002">3D-structure</keyword>
<keyword id="KW-0997">Cell inner membrane</keyword>
<keyword id="KW-1003">Cell membrane</keyword>
<keyword id="KW-0472">Membrane</keyword>
<keyword id="KW-0653">Protein transport</keyword>
<keyword id="KW-0812">Transmembrane</keyword>
<keyword id="KW-1133">Transmembrane helix</keyword>
<keyword id="KW-0813">Transport</keyword>
<name>GSPM_KLEPN</name>
<reference key="1">
    <citation type="journal article" date="1990" name="Mol. Microbiol.">
        <title>Five genes at the 3' end of the Klebsiella pneumoniae pulC operon are required for pullulanase secretion.</title>
        <authorList>
            <person name="Pugsley A.P."/>
            <person name="Reyss I."/>
        </authorList>
    </citation>
    <scope>NUCLEOTIDE SEQUENCE [GENOMIC DNA]</scope>
    <source>
        <strain>UNF 5023</strain>
    </source>
</reference>
<proteinExistence type="evidence at protein level"/>
<feature type="chain" id="PRO_0000207326" description="Type II secretion system protein M">
    <location>
        <begin position="1"/>
        <end position="161"/>
    </location>
</feature>
<feature type="topological domain" description="Cytoplasmic" evidence="1">
    <location>
        <begin position="1"/>
        <end position="16"/>
    </location>
</feature>
<feature type="transmembrane region" description="Helical" evidence="4">
    <location>
        <begin position="17"/>
        <end position="36"/>
    </location>
</feature>
<feature type="topological domain" description="Periplasmic" evidence="1">
    <location>
        <begin position="37"/>
        <end position="161"/>
    </location>
</feature>
<feature type="helix" evidence="6">
    <location>
        <begin position="82"/>
        <end position="93"/>
    </location>
</feature>
<feature type="strand" evidence="6">
    <location>
        <begin position="97"/>
        <end position="103"/>
    </location>
</feature>
<feature type="strand" evidence="6">
    <location>
        <begin position="106"/>
        <end position="111"/>
    </location>
</feature>
<feature type="helix" evidence="6">
    <location>
        <begin position="116"/>
        <end position="128"/>
    </location>
</feature>
<feature type="strand" evidence="6">
    <location>
        <begin position="133"/>
        <end position="141"/>
    </location>
</feature>
<feature type="strand" evidence="6">
    <location>
        <begin position="144"/>
        <end position="156"/>
    </location>
</feature>
<dbReference type="EMBL" id="M32613">
    <property type="protein sequence ID" value="AAA25135.1"/>
    <property type="molecule type" value="Genomic_DNA"/>
</dbReference>
<dbReference type="EMBL" id="X52462">
    <property type="protein sequence ID" value="CAA36698.1"/>
    <property type="molecule type" value="Genomic_DNA"/>
</dbReference>
<dbReference type="PIR" id="S11801">
    <property type="entry name" value="S11801"/>
</dbReference>
<dbReference type="PDB" id="7ZE0">
    <property type="method" value="NMR"/>
    <property type="chains" value="A/B=80-161"/>
</dbReference>
<dbReference type="PDB" id="8A9X">
    <property type="method" value="X-ray"/>
    <property type="resolution" value="1.52 A"/>
    <property type="chains" value="A/B/C/D/E/F/G=80-158"/>
</dbReference>
<dbReference type="PDBsum" id="7ZE0"/>
<dbReference type="PDBsum" id="8A9X"/>
<dbReference type="SMR" id="P15752"/>
<dbReference type="TCDB" id="3.A.15.1.1">
    <property type="family name" value="the outer membrane protein secreting main terminal branch (mtb) family"/>
</dbReference>
<dbReference type="GO" id="GO:0005886">
    <property type="term" value="C:plasma membrane"/>
    <property type="evidence" value="ECO:0007669"/>
    <property type="project" value="UniProtKB-SubCell"/>
</dbReference>
<dbReference type="GO" id="GO:0015627">
    <property type="term" value="C:type II protein secretion system complex"/>
    <property type="evidence" value="ECO:0007669"/>
    <property type="project" value="InterPro"/>
</dbReference>
<dbReference type="GO" id="GO:0015628">
    <property type="term" value="P:protein secretion by the type II secretion system"/>
    <property type="evidence" value="ECO:0007669"/>
    <property type="project" value="InterPro"/>
</dbReference>
<dbReference type="Gene3D" id="3.30.1360.100">
    <property type="entry name" value="General secretion pathway protein M, EpsM"/>
    <property type="match status" value="1"/>
</dbReference>
<dbReference type="InterPro" id="IPR007690">
    <property type="entry name" value="T2SS_GspM"/>
</dbReference>
<dbReference type="InterPro" id="IPR023229">
    <property type="entry name" value="T2SS_M_periplasmic_sf"/>
</dbReference>
<dbReference type="Pfam" id="PF04612">
    <property type="entry name" value="T2SSM"/>
    <property type="match status" value="1"/>
</dbReference>
<dbReference type="PIRSF" id="PIRSF006291">
    <property type="entry name" value="GspM"/>
    <property type="match status" value="1"/>
</dbReference>
<dbReference type="SUPFAM" id="SSF103054">
    <property type="entry name" value="General secretion pathway protein M, EpsM"/>
    <property type="match status" value="1"/>
</dbReference>
<evidence type="ECO:0000250" key="1">
    <source>
        <dbReference type="UniProtKB" id="P25061"/>
    </source>
</evidence>
<evidence type="ECO:0000250" key="2">
    <source>
        <dbReference type="UniProtKB" id="P41851"/>
    </source>
</evidence>
<evidence type="ECO:0000250" key="3">
    <source>
        <dbReference type="UniProtKB" id="Q00514"/>
    </source>
</evidence>
<evidence type="ECO:0000255" key="4"/>
<evidence type="ECO:0000305" key="5"/>
<evidence type="ECO:0007829" key="6">
    <source>
        <dbReference type="PDB" id="8A9X"/>
    </source>
</evidence>
<accession>P15752</accession>
<protein>
    <recommendedName>
        <fullName>Type II secretion system protein M</fullName>
        <shortName>T2SS protein M</shortName>
    </recommendedName>
    <alternativeName>
        <fullName>General secretion pathway protein M</fullName>
    </alternativeName>
    <alternativeName>
        <fullName>Pullulanase secretion protein PulM</fullName>
    </alternativeName>
</protein>
<comment type="function">
    <text evidence="1">Inner membrane component of the type II secretion system required for the energy-dependent secretion of extracellular factors such as proteases and toxins from the periplasm. Plays a role in the complex assembly and recruits PulL resulting in a stable complex in the inner membrane. Provides thus a link between the energy-providing PulE protein in the cytoplasm and the rest of the T2SS machinery.</text>
</comment>
<comment type="subunit">
    <text evidence="1 2 3">Type II secretion system is composed of four main components: the outer membrane complex, the inner membrane complex, the cytoplasmic secretion ATPase and the periplasm-spanning pseudopilus (By similarity). Forms homodimers (By similarity). Interacts with PulL/GspL. Interacts with PulE/GspE and PulF/GspF (By similarity).</text>
</comment>
<comment type="subcellular location">
    <subcellularLocation>
        <location evidence="1">Cell inner membrane</location>
        <topology evidence="1">Single-pass membrane protein</topology>
    </subcellularLocation>
</comment>
<comment type="similarity">
    <text evidence="5">Belongs to the GSP M family.</text>
</comment>
<sequence length="161" mass="18419">MHNLLALWQQRTRRERCLLLGMAVVLLIGLVYYTLWQPWQNREAQWRQTLAREQASLQWMRQQTPLIRQLRNQKPPTAPEEPSTVIMREAARHGLTIVRLQPQGSRLSLTVQPADFQALMAWLDALGQAGMTTATLAVTAVAQQPGWVTVNTLVLERSDEK</sequence>
<organism>
    <name type="scientific">Klebsiella pneumoniae</name>
    <dbReference type="NCBI Taxonomy" id="573"/>
    <lineage>
        <taxon>Bacteria</taxon>
        <taxon>Pseudomonadati</taxon>
        <taxon>Pseudomonadota</taxon>
        <taxon>Gammaproteobacteria</taxon>
        <taxon>Enterobacterales</taxon>
        <taxon>Enterobacteriaceae</taxon>
        <taxon>Klebsiella/Raoultella group</taxon>
        <taxon>Klebsiella</taxon>
        <taxon>Klebsiella pneumoniae complex</taxon>
    </lineage>
</organism>
<gene>
    <name type="primary">pulM</name>
</gene>